<reference key="1">
    <citation type="submission" date="2006-08" db="EMBL/GenBank/DDBJ databases">
        <title>Complete sequence of Maricaulis maris MCS10.</title>
        <authorList>
            <consortium name="US DOE Joint Genome Institute"/>
            <person name="Copeland A."/>
            <person name="Lucas S."/>
            <person name="Lapidus A."/>
            <person name="Barry K."/>
            <person name="Detter J.C."/>
            <person name="Glavina del Rio T."/>
            <person name="Hammon N."/>
            <person name="Israni S."/>
            <person name="Dalin E."/>
            <person name="Tice H."/>
            <person name="Pitluck S."/>
            <person name="Saunders E."/>
            <person name="Brettin T."/>
            <person name="Bruce D."/>
            <person name="Han C."/>
            <person name="Tapia R."/>
            <person name="Gilna P."/>
            <person name="Schmutz J."/>
            <person name="Larimer F."/>
            <person name="Land M."/>
            <person name="Hauser L."/>
            <person name="Kyrpides N."/>
            <person name="Mikhailova N."/>
            <person name="Viollier P."/>
            <person name="Stephens C."/>
            <person name="Richardson P."/>
        </authorList>
    </citation>
    <scope>NUCLEOTIDE SEQUENCE [LARGE SCALE GENOMIC DNA]</scope>
    <source>
        <strain>MCS10</strain>
    </source>
</reference>
<organism>
    <name type="scientific">Maricaulis maris (strain MCS10)</name>
    <name type="common">Caulobacter maris</name>
    <dbReference type="NCBI Taxonomy" id="394221"/>
    <lineage>
        <taxon>Bacteria</taxon>
        <taxon>Pseudomonadati</taxon>
        <taxon>Pseudomonadota</taxon>
        <taxon>Alphaproteobacteria</taxon>
        <taxon>Maricaulales</taxon>
        <taxon>Maricaulaceae</taxon>
        <taxon>Maricaulis</taxon>
    </lineage>
</organism>
<gene>
    <name evidence="1" type="primary">mnmA</name>
    <name type="ordered locus">Mmar10_0693</name>
</gene>
<sequence>MTTDLTGRARAQADDLISRLGLAGDPLGLGGNPGDHRVVVAMSGGVDSSVTAALLHHLGYDVVGVTLQLYDHGAAMAKKGACCAGQDIYDAKRVAEACGFRHYVLDYESRFREAVIEEFADTYLAGFTPIPCVRCNQTVKFADLLTTARQLGAVCMATGHYIQRVDGPNGAELRRAADAGKDQSYFLFATTHDQLDFLRFPLGHLNKDQTRELAEAFGLIVADKPDSQDICFVPNGRYVDIVEKVRPGASRPGEIVHVDGRVLGTHEGVIRYTVGQRRGLKIAVGDPLYVVRLDAAKAEVVVGPREALEIDTIALKDINWLGDEAPLDGAPVRVKVRSTRPPVPAALSVDGDDIRVVLARGEEGVAPGQACVFYSSDDEDRVLGGGWITSTSGGSGGSSGVRLIG</sequence>
<comment type="function">
    <text evidence="1">Catalyzes the 2-thiolation of uridine at the wobble position (U34) of tRNA, leading to the formation of s(2)U34.</text>
</comment>
<comment type="catalytic activity">
    <reaction evidence="1">
        <text>S-sulfanyl-L-cysteinyl-[protein] + uridine(34) in tRNA + AH2 + ATP = 2-thiouridine(34) in tRNA + L-cysteinyl-[protein] + A + AMP + diphosphate + H(+)</text>
        <dbReference type="Rhea" id="RHEA:47032"/>
        <dbReference type="Rhea" id="RHEA-COMP:10131"/>
        <dbReference type="Rhea" id="RHEA-COMP:11726"/>
        <dbReference type="Rhea" id="RHEA-COMP:11727"/>
        <dbReference type="Rhea" id="RHEA-COMP:11728"/>
        <dbReference type="ChEBI" id="CHEBI:13193"/>
        <dbReference type="ChEBI" id="CHEBI:15378"/>
        <dbReference type="ChEBI" id="CHEBI:17499"/>
        <dbReference type="ChEBI" id="CHEBI:29950"/>
        <dbReference type="ChEBI" id="CHEBI:30616"/>
        <dbReference type="ChEBI" id="CHEBI:33019"/>
        <dbReference type="ChEBI" id="CHEBI:61963"/>
        <dbReference type="ChEBI" id="CHEBI:65315"/>
        <dbReference type="ChEBI" id="CHEBI:87170"/>
        <dbReference type="ChEBI" id="CHEBI:456215"/>
        <dbReference type="EC" id="2.8.1.13"/>
    </reaction>
</comment>
<comment type="subcellular location">
    <subcellularLocation>
        <location evidence="1">Cytoplasm</location>
    </subcellularLocation>
</comment>
<comment type="similarity">
    <text evidence="1">Belongs to the MnmA/TRMU family.</text>
</comment>
<name>MNMA_MARMM</name>
<dbReference type="EC" id="2.8.1.13" evidence="1"/>
<dbReference type="EMBL" id="CP000449">
    <property type="protein sequence ID" value="ABI64986.1"/>
    <property type="molecule type" value="Genomic_DNA"/>
</dbReference>
<dbReference type="RefSeq" id="WP_011642633.1">
    <property type="nucleotide sequence ID" value="NC_008347.1"/>
</dbReference>
<dbReference type="SMR" id="Q0ARV1"/>
<dbReference type="STRING" id="394221.Mmar10_0693"/>
<dbReference type="KEGG" id="mmr:Mmar10_0693"/>
<dbReference type="eggNOG" id="COG0482">
    <property type="taxonomic scope" value="Bacteria"/>
</dbReference>
<dbReference type="HOGENOM" id="CLU_035188_0_1_5"/>
<dbReference type="OrthoDB" id="9800696at2"/>
<dbReference type="Proteomes" id="UP000001964">
    <property type="component" value="Chromosome"/>
</dbReference>
<dbReference type="GO" id="GO:0005737">
    <property type="term" value="C:cytoplasm"/>
    <property type="evidence" value="ECO:0007669"/>
    <property type="project" value="UniProtKB-SubCell"/>
</dbReference>
<dbReference type="GO" id="GO:0005524">
    <property type="term" value="F:ATP binding"/>
    <property type="evidence" value="ECO:0007669"/>
    <property type="project" value="UniProtKB-KW"/>
</dbReference>
<dbReference type="GO" id="GO:0000049">
    <property type="term" value="F:tRNA binding"/>
    <property type="evidence" value="ECO:0007669"/>
    <property type="project" value="UniProtKB-KW"/>
</dbReference>
<dbReference type="GO" id="GO:0103016">
    <property type="term" value="F:tRNA-uridine 2-sulfurtransferase activity"/>
    <property type="evidence" value="ECO:0007669"/>
    <property type="project" value="UniProtKB-EC"/>
</dbReference>
<dbReference type="GO" id="GO:0002143">
    <property type="term" value="P:tRNA wobble position uridine thiolation"/>
    <property type="evidence" value="ECO:0007669"/>
    <property type="project" value="TreeGrafter"/>
</dbReference>
<dbReference type="CDD" id="cd01998">
    <property type="entry name" value="MnmA_TRMU-like"/>
    <property type="match status" value="1"/>
</dbReference>
<dbReference type="FunFam" id="2.30.30.280:FF:000001">
    <property type="entry name" value="tRNA-specific 2-thiouridylase MnmA"/>
    <property type="match status" value="1"/>
</dbReference>
<dbReference type="FunFam" id="3.40.50.620:FF:000115">
    <property type="entry name" value="tRNA-specific 2-thiouridylase MnmA"/>
    <property type="match status" value="1"/>
</dbReference>
<dbReference type="Gene3D" id="2.30.30.280">
    <property type="entry name" value="Adenine nucleotide alpha hydrolases-like domains"/>
    <property type="match status" value="1"/>
</dbReference>
<dbReference type="Gene3D" id="3.40.50.620">
    <property type="entry name" value="HUPs"/>
    <property type="match status" value="1"/>
</dbReference>
<dbReference type="Gene3D" id="2.40.30.10">
    <property type="entry name" value="Translation factors"/>
    <property type="match status" value="1"/>
</dbReference>
<dbReference type="HAMAP" id="MF_00144">
    <property type="entry name" value="tRNA_thiouridyl_MnmA"/>
    <property type="match status" value="1"/>
</dbReference>
<dbReference type="InterPro" id="IPR004506">
    <property type="entry name" value="MnmA-like"/>
</dbReference>
<dbReference type="InterPro" id="IPR046885">
    <property type="entry name" value="MnmA-like_C"/>
</dbReference>
<dbReference type="InterPro" id="IPR046884">
    <property type="entry name" value="MnmA-like_central"/>
</dbReference>
<dbReference type="InterPro" id="IPR023382">
    <property type="entry name" value="MnmA-like_central_sf"/>
</dbReference>
<dbReference type="InterPro" id="IPR014729">
    <property type="entry name" value="Rossmann-like_a/b/a_fold"/>
</dbReference>
<dbReference type="NCBIfam" id="NF001138">
    <property type="entry name" value="PRK00143.1"/>
    <property type="match status" value="1"/>
</dbReference>
<dbReference type="NCBIfam" id="TIGR00420">
    <property type="entry name" value="trmU"/>
    <property type="match status" value="1"/>
</dbReference>
<dbReference type="PANTHER" id="PTHR11933:SF5">
    <property type="entry name" value="MITOCHONDRIAL TRNA-SPECIFIC 2-THIOURIDYLASE 1"/>
    <property type="match status" value="1"/>
</dbReference>
<dbReference type="PANTHER" id="PTHR11933">
    <property type="entry name" value="TRNA 5-METHYLAMINOMETHYL-2-THIOURIDYLATE -METHYLTRANSFERASE"/>
    <property type="match status" value="1"/>
</dbReference>
<dbReference type="Pfam" id="PF03054">
    <property type="entry name" value="tRNA_Me_trans"/>
    <property type="match status" value="1"/>
</dbReference>
<dbReference type="Pfam" id="PF20258">
    <property type="entry name" value="tRNA_Me_trans_C"/>
    <property type="match status" value="1"/>
</dbReference>
<dbReference type="Pfam" id="PF20259">
    <property type="entry name" value="tRNA_Me_trans_M"/>
    <property type="match status" value="1"/>
</dbReference>
<dbReference type="SUPFAM" id="SSF52402">
    <property type="entry name" value="Adenine nucleotide alpha hydrolases-like"/>
    <property type="match status" value="1"/>
</dbReference>
<proteinExistence type="inferred from homology"/>
<feature type="chain" id="PRO_0000349691" description="tRNA-specific 2-thiouridylase MnmA">
    <location>
        <begin position="1"/>
        <end position="405"/>
    </location>
</feature>
<feature type="region of interest" description="Interaction with tRNA" evidence="1">
    <location>
        <begin position="181"/>
        <end position="183"/>
    </location>
</feature>
<feature type="active site" description="Nucleophile" evidence="1">
    <location>
        <position position="135"/>
    </location>
</feature>
<feature type="active site" description="Cysteine persulfide intermediate" evidence="1">
    <location>
        <position position="231"/>
    </location>
</feature>
<feature type="binding site" evidence="1">
    <location>
        <begin position="41"/>
        <end position="48"/>
    </location>
    <ligand>
        <name>ATP</name>
        <dbReference type="ChEBI" id="CHEBI:30616"/>
    </ligand>
</feature>
<feature type="binding site" evidence="1">
    <location>
        <position position="67"/>
    </location>
    <ligand>
        <name>ATP</name>
        <dbReference type="ChEBI" id="CHEBI:30616"/>
    </ligand>
</feature>
<feature type="binding site" evidence="1">
    <location>
        <position position="159"/>
    </location>
    <ligand>
        <name>ATP</name>
        <dbReference type="ChEBI" id="CHEBI:30616"/>
    </ligand>
</feature>
<feature type="site" description="Interaction with tRNA" evidence="1">
    <location>
        <position position="160"/>
    </location>
</feature>
<feature type="site" description="Interaction with tRNA" evidence="1">
    <location>
        <position position="369"/>
    </location>
</feature>
<feature type="disulfide bond" description="Alternate" evidence="1">
    <location>
        <begin position="135"/>
        <end position="231"/>
    </location>
</feature>
<keyword id="KW-0067">ATP-binding</keyword>
<keyword id="KW-0963">Cytoplasm</keyword>
<keyword id="KW-1015">Disulfide bond</keyword>
<keyword id="KW-0547">Nucleotide-binding</keyword>
<keyword id="KW-1185">Reference proteome</keyword>
<keyword id="KW-0694">RNA-binding</keyword>
<keyword id="KW-0808">Transferase</keyword>
<keyword id="KW-0819">tRNA processing</keyword>
<keyword id="KW-0820">tRNA-binding</keyword>
<accession>Q0ARV1</accession>
<evidence type="ECO:0000255" key="1">
    <source>
        <dbReference type="HAMAP-Rule" id="MF_00144"/>
    </source>
</evidence>
<protein>
    <recommendedName>
        <fullName evidence="1">tRNA-specific 2-thiouridylase MnmA</fullName>
        <ecNumber evidence="1">2.8.1.13</ecNumber>
    </recommendedName>
</protein>